<reference key="1">
    <citation type="journal article" date="2007" name="PLoS Genet.">
        <title>Meningococcal genetic variation mechanisms viewed through comparative analysis of serogroup C strain FAM18.</title>
        <authorList>
            <person name="Bentley S.D."/>
            <person name="Vernikos G.S."/>
            <person name="Snyder L.A.S."/>
            <person name="Churcher C."/>
            <person name="Arrowsmith C."/>
            <person name="Chillingworth T."/>
            <person name="Cronin A."/>
            <person name="Davis P.H."/>
            <person name="Holroyd N.E."/>
            <person name="Jagels K."/>
            <person name="Maddison M."/>
            <person name="Moule S."/>
            <person name="Rabbinowitsch E."/>
            <person name="Sharp S."/>
            <person name="Unwin L."/>
            <person name="Whitehead S."/>
            <person name="Quail M.A."/>
            <person name="Achtman M."/>
            <person name="Barrell B.G."/>
            <person name="Saunders N.J."/>
            <person name="Parkhill J."/>
        </authorList>
    </citation>
    <scope>NUCLEOTIDE SEQUENCE [LARGE SCALE GENOMIC DNA]</scope>
    <source>
        <strain>ATCC 700532 / DSM 15464 / FAM18</strain>
    </source>
</reference>
<keyword id="KW-0067">ATP-binding</keyword>
<keyword id="KW-0143">Chaperone</keyword>
<keyword id="KW-0479">Metal-binding</keyword>
<keyword id="KW-0547">Nucleotide-binding</keyword>
<keyword id="KW-0862">Zinc</keyword>
<dbReference type="EMBL" id="AM421808">
    <property type="protein sequence ID" value="CAM10537.1"/>
    <property type="molecule type" value="Genomic_DNA"/>
</dbReference>
<dbReference type="RefSeq" id="WP_002220823.1">
    <property type="nucleotide sequence ID" value="NC_008767.1"/>
</dbReference>
<dbReference type="SMR" id="A1KUJ4"/>
<dbReference type="KEGG" id="nmc:NMC1307"/>
<dbReference type="HOGENOM" id="CLU_014218_8_2_4"/>
<dbReference type="Proteomes" id="UP000002286">
    <property type="component" value="Chromosome"/>
</dbReference>
<dbReference type="GO" id="GO:0009376">
    <property type="term" value="C:HslUV protease complex"/>
    <property type="evidence" value="ECO:0007669"/>
    <property type="project" value="TreeGrafter"/>
</dbReference>
<dbReference type="GO" id="GO:0005524">
    <property type="term" value="F:ATP binding"/>
    <property type="evidence" value="ECO:0007669"/>
    <property type="project" value="UniProtKB-UniRule"/>
</dbReference>
<dbReference type="GO" id="GO:0016887">
    <property type="term" value="F:ATP hydrolysis activity"/>
    <property type="evidence" value="ECO:0007669"/>
    <property type="project" value="InterPro"/>
</dbReference>
<dbReference type="GO" id="GO:0140662">
    <property type="term" value="F:ATP-dependent protein folding chaperone"/>
    <property type="evidence" value="ECO:0007669"/>
    <property type="project" value="InterPro"/>
</dbReference>
<dbReference type="GO" id="GO:0046983">
    <property type="term" value="F:protein dimerization activity"/>
    <property type="evidence" value="ECO:0007669"/>
    <property type="project" value="InterPro"/>
</dbReference>
<dbReference type="GO" id="GO:0051082">
    <property type="term" value="F:unfolded protein binding"/>
    <property type="evidence" value="ECO:0007669"/>
    <property type="project" value="UniProtKB-UniRule"/>
</dbReference>
<dbReference type="GO" id="GO:0008270">
    <property type="term" value="F:zinc ion binding"/>
    <property type="evidence" value="ECO:0007669"/>
    <property type="project" value="InterPro"/>
</dbReference>
<dbReference type="GO" id="GO:0051301">
    <property type="term" value="P:cell division"/>
    <property type="evidence" value="ECO:0007669"/>
    <property type="project" value="TreeGrafter"/>
</dbReference>
<dbReference type="GO" id="GO:0051603">
    <property type="term" value="P:proteolysis involved in protein catabolic process"/>
    <property type="evidence" value="ECO:0007669"/>
    <property type="project" value="TreeGrafter"/>
</dbReference>
<dbReference type="CDD" id="cd19497">
    <property type="entry name" value="RecA-like_ClpX"/>
    <property type="match status" value="1"/>
</dbReference>
<dbReference type="FunFam" id="1.10.8.60:FF:000002">
    <property type="entry name" value="ATP-dependent Clp protease ATP-binding subunit ClpX"/>
    <property type="match status" value="1"/>
</dbReference>
<dbReference type="FunFam" id="3.40.50.300:FF:000005">
    <property type="entry name" value="ATP-dependent Clp protease ATP-binding subunit ClpX"/>
    <property type="match status" value="1"/>
</dbReference>
<dbReference type="Gene3D" id="1.10.8.60">
    <property type="match status" value="1"/>
</dbReference>
<dbReference type="Gene3D" id="6.20.220.10">
    <property type="entry name" value="ClpX chaperone, C4-type zinc finger domain"/>
    <property type="match status" value="1"/>
</dbReference>
<dbReference type="Gene3D" id="3.40.50.300">
    <property type="entry name" value="P-loop containing nucleotide triphosphate hydrolases"/>
    <property type="match status" value="1"/>
</dbReference>
<dbReference type="HAMAP" id="MF_00175">
    <property type="entry name" value="ClpX"/>
    <property type="match status" value="1"/>
</dbReference>
<dbReference type="InterPro" id="IPR003593">
    <property type="entry name" value="AAA+_ATPase"/>
</dbReference>
<dbReference type="InterPro" id="IPR050052">
    <property type="entry name" value="ATP-dep_Clp_protease_ClpX"/>
</dbReference>
<dbReference type="InterPro" id="IPR003959">
    <property type="entry name" value="ATPase_AAA_core"/>
</dbReference>
<dbReference type="InterPro" id="IPR019489">
    <property type="entry name" value="Clp_ATPase_C"/>
</dbReference>
<dbReference type="InterPro" id="IPR004487">
    <property type="entry name" value="Clp_protease_ATP-bd_su_ClpX"/>
</dbReference>
<dbReference type="InterPro" id="IPR046425">
    <property type="entry name" value="ClpX_bact"/>
</dbReference>
<dbReference type="InterPro" id="IPR027417">
    <property type="entry name" value="P-loop_NTPase"/>
</dbReference>
<dbReference type="InterPro" id="IPR010603">
    <property type="entry name" value="Znf_CppX_C4"/>
</dbReference>
<dbReference type="InterPro" id="IPR038366">
    <property type="entry name" value="Znf_CppX_C4_sf"/>
</dbReference>
<dbReference type="NCBIfam" id="TIGR00382">
    <property type="entry name" value="clpX"/>
    <property type="match status" value="1"/>
</dbReference>
<dbReference type="NCBIfam" id="NF003745">
    <property type="entry name" value="PRK05342.1"/>
    <property type="match status" value="1"/>
</dbReference>
<dbReference type="PANTHER" id="PTHR48102:SF7">
    <property type="entry name" value="ATP-DEPENDENT CLP PROTEASE ATP-BINDING SUBUNIT CLPX-LIKE, MITOCHONDRIAL"/>
    <property type="match status" value="1"/>
</dbReference>
<dbReference type="PANTHER" id="PTHR48102">
    <property type="entry name" value="ATP-DEPENDENT CLP PROTEASE ATP-BINDING SUBUNIT CLPX-LIKE, MITOCHONDRIAL-RELATED"/>
    <property type="match status" value="1"/>
</dbReference>
<dbReference type="Pfam" id="PF07724">
    <property type="entry name" value="AAA_2"/>
    <property type="match status" value="1"/>
</dbReference>
<dbReference type="Pfam" id="PF10431">
    <property type="entry name" value="ClpB_D2-small"/>
    <property type="match status" value="1"/>
</dbReference>
<dbReference type="Pfam" id="PF06689">
    <property type="entry name" value="zf-C4_ClpX"/>
    <property type="match status" value="1"/>
</dbReference>
<dbReference type="SMART" id="SM00382">
    <property type="entry name" value="AAA"/>
    <property type="match status" value="1"/>
</dbReference>
<dbReference type="SMART" id="SM01086">
    <property type="entry name" value="ClpB_D2-small"/>
    <property type="match status" value="1"/>
</dbReference>
<dbReference type="SMART" id="SM00994">
    <property type="entry name" value="zf-C4_ClpX"/>
    <property type="match status" value="1"/>
</dbReference>
<dbReference type="SUPFAM" id="SSF57716">
    <property type="entry name" value="Glucocorticoid receptor-like (DNA-binding domain)"/>
    <property type="match status" value="1"/>
</dbReference>
<dbReference type="SUPFAM" id="SSF52540">
    <property type="entry name" value="P-loop containing nucleoside triphosphate hydrolases"/>
    <property type="match status" value="1"/>
</dbReference>
<dbReference type="PROSITE" id="PS51902">
    <property type="entry name" value="CLPX_ZB"/>
    <property type="match status" value="1"/>
</dbReference>
<protein>
    <recommendedName>
        <fullName evidence="1">ATP-dependent Clp protease ATP-binding subunit ClpX</fullName>
    </recommendedName>
</protein>
<sequence>MSNENRTCSFCGKSKSHVKHLIEGENAFICDECVSNCIEILHEDGNDGTPSESAGGEPEESGKLPTPAEIVANLNDHVIGQEQAKKALAVSVYNHYKRLRHPKAGANVELSKSNILLIGPTGSGKTLLAQSLARKLDVPFVMADATTLTEAGYVGEDVEQIITKLLGKCDFDVEKAQRGIVYIDEIDKISRKGDNPSITRDVSGEGVQQALLKLIEGTVASVPPQGGRKHPNQEFINVDTTNILFICGGAFAGLEKVIRQRTEKGGIGFGASVHSKDENADITKLFGIVEPEDLIKFGLIPELIGRLPVIATLEELDEDALINILTEPKNALVKQYQALFGMENVELEFEEGALRSIARQAMERKTGARGLRSIVERCLLDTMYRLPDLKGLKKVVVGKAVIEEGREPELVFEP</sequence>
<feature type="chain" id="PRO_1000024596" description="ATP-dependent Clp protease ATP-binding subunit ClpX">
    <location>
        <begin position="1"/>
        <end position="414"/>
    </location>
</feature>
<feature type="domain" description="ClpX-type ZB" evidence="2">
    <location>
        <begin position="1"/>
        <end position="49"/>
    </location>
</feature>
<feature type="region of interest" description="Disordered" evidence="3">
    <location>
        <begin position="44"/>
        <end position="65"/>
    </location>
</feature>
<feature type="binding site" evidence="2">
    <location>
        <position position="8"/>
    </location>
    <ligand>
        <name>Zn(2+)</name>
        <dbReference type="ChEBI" id="CHEBI:29105"/>
    </ligand>
</feature>
<feature type="binding site" evidence="2">
    <location>
        <position position="11"/>
    </location>
    <ligand>
        <name>Zn(2+)</name>
        <dbReference type="ChEBI" id="CHEBI:29105"/>
    </ligand>
</feature>
<feature type="binding site" evidence="2">
    <location>
        <position position="30"/>
    </location>
    <ligand>
        <name>Zn(2+)</name>
        <dbReference type="ChEBI" id="CHEBI:29105"/>
    </ligand>
</feature>
<feature type="binding site" evidence="2">
    <location>
        <position position="33"/>
    </location>
    <ligand>
        <name>Zn(2+)</name>
        <dbReference type="ChEBI" id="CHEBI:29105"/>
    </ligand>
</feature>
<feature type="binding site" evidence="1">
    <location>
        <begin position="120"/>
        <end position="127"/>
    </location>
    <ligand>
        <name>ATP</name>
        <dbReference type="ChEBI" id="CHEBI:30616"/>
    </ligand>
</feature>
<organism>
    <name type="scientific">Neisseria meningitidis serogroup C / serotype 2a (strain ATCC 700532 / DSM 15464 / FAM18)</name>
    <dbReference type="NCBI Taxonomy" id="272831"/>
    <lineage>
        <taxon>Bacteria</taxon>
        <taxon>Pseudomonadati</taxon>
        <taxon>Pseudomonadota</taxon>
        <taxon>Betaproteobacteria</taxon>
        <taxon>Neisseriales</taxon>
        <taxon>Neisseriaceae</taxon>
        <taxon>Neisseria</taxon>
    </lineage>
</organism>
<comment type="function">
    <text evidence="1">ATP-dependent specificity component of the Clp protease. It directs the protease to specific substrates. Can perform chaperone functions in the absence of ClpP.</text>
</comment>
<comment type="subunit">
    <text evidence="1">Component of the ClpX-ClpP complex. Forms a hexameric ring that, in the presence of ATP, binds to fourteen ClpP subunits assembled into a disk-like structure with a central cavity, resembling the structure of eukaryotic proteasomes.</text>
</comment>
<comment type="similarity">
    <text evidence="1">Belongs to the ClpX chaperone family.</text>
</comment>
<proteinExistence type="inferred from homology"/>
<gene>
    <name evidence="1" type="primary">clpX</name>
    <name type="ordered locus">NMC1307</name>
</gene>
<name>CLPX_NEIMF</name>
<evidence type="ECO:0000255" key="1">
    <source>
        <dbReference type="HAMAP-Rule" id="MF_00175"/>
    </source>
</evidence>
<evidence type="ECO:0000255" key="2">
    <source>
        <dbReference type="PROSITE-ProRule" id="PRU01250"/>
    </source>
</evidence>
<evidence type="ECO:0000256" key="3">
    <source>
        <dbReference type="SAM" id="MobiDB-lite"/>
    </source>
</evidence>
<accession>A1KUJ4</accession>